<organism>
    <name type="scientific">Salmonella arizonae (strain ATCC BAA-731 / CDC346-86 / RSK2980)</name>
    <dbReference type="NCBI Taxonomy" id="41514"/>
    <lineage>
        <taxon>Bacteria</taxon>
        <taxon>Pseudomonadati</taxon>
        <taxon>Pseudomonadota</taxon>
        <taxon>Gammaproteobacteria</taxon>
        <taxon>Enterobacterales</taxon>
        <taxon>Enterobacteriaceae</taxon>
        <taxon>Salmonella</taxon>
    </lineage>
</organism>
<sequence length="408" mass="44774">MDKLLERFLHYVSLDTQSKSGVRQVPSTEGQWKLLRLLKQQLEEMGLVNITLSEKGTLMATLPANVEGDIPAIGFISHVDTSPDFSGKNVTPQIVENYRGGDIALGIGDEVLSPVMFPVLHQLLGQTLITTDGKTLLGADDKAGVAEIMTALAVLKGNNIPHGEIKVAFTPDEEVGKGAKHFDVEAFGAQWAYTVDGGGVGELEFENFNAASVNIKIVGNNVHPGTAKGVMVNALSLAARIHAEVPVDEAPETTEGYEGFYHLASMKGTVDRADMHYIIRDFDRKQFEARKRKMMEIAKKVGKGLHPDCYIELVIEDSYYNMREKVVEHPHILDIAQQAMRDCDITPEMKPIRGGTDGAQLSFMGLPCPNLFTGGYNYHGKHEFVTLEGMEKAVQVIVRIAELTAKQQ</sequence>
<proteinExistence type="inferred from homology"/>
<feature type="chain" id="PRO_1000081961" description="Peptidase T">
    <location>
        <begin position="1"/>
        <end position="408"/>
    </location>
</feature>
<feature type="active site" evidence="1">
    <location>
        <position position="80"/>
    </location>
</feature>
<feature type="active site" description="Proton acceptor" evidence="1">
    <location>
        <position position="173"/>
    </location>
</feature>
<feature type="binding site" evidence="1">
    <location>
        <position position="78"/>
    </location>
    <ligand>
        <name>Zn(2+)</name>
        <dbReference type="ChEBI" id="CHEBI:29105"/>
        <label>1</label>
    </ligand>
</feature>
<feature type="binding site" evidence="1">
    <location>
        <position position="140"/>
    </location>
    <ligand>
        <name>Zn(2+)</name>
        <dbReference type="ChEBI" id="CHEBI:29105"/>
        <label>1</label>
    </ligand>
</feature>
<feature type="binding site" evidence="1">
    <location>
        <position position="140"/>
    </location>
    <ligand>
        <name>Zn(2+)</name>
        <dbReference type="ChEBI" id="CHEBI:29105"/>
        <label>2</label>
    </ligand>
</feature>
<feature type="binding site" evidence="1">
    <location>
        <position position="174"/>
    </location>
    <ligand>
        <name>Zn(2+)</name>
        <dbReference type="ChEBI" id="CHEBI:29105"/>
        <label>2</label>
    </ligand>
</feature>
<feature type="binding site" evidence="1">
    <location>
        <position position="196"/>
    </location>
    <ligand>
        <name>Zn(2+)</name>
        <dbReference type="ChEBI" id="CHEBI:29105"/>
        <label>1</label>
    </ligand>
</feature>
<feature type="binding site" evidence="1">
    <location>
        <position position="379"/>
    </location>
    <ligand>
        <name>Zn(2+)</name>
        <dbReference type="ChEBI" id="CHEBI:29105"/>
        <label>2</label>
    </ligand>
</feature>
<dbReference type="EC" id="3.4.11.4" evidence="1"/>
<dbReference type="EMBL" id="CP000880">
    <property type="protein sequence ID" value="ABX21648.1"/>
    <property type="molecule type" value="Genomic_DNA"/>
</dbReference>
<dbReference type="SMR" id="A9MG86"/>
<dbReference type="STRING" id="41514.SARI_01762"/>
<dbReference type="MEROPS" id="M20.003"/>
<dbReference type="KEGG" id="ses:SARI_01762"/>
<dbReference type="HOGENOM" id="CLU_053676_0_0_6"/>
<dbReference type="Proteomes" id="UP000002084">
    <property type="component" value="Chromosome"/>
</dbReference>
<dbReference type="GO" id="GO:0005829">
    <property type="term" value="C:cytosol"/>
    <property type="evidence" value="ECO:0007669"/>
    <property type="project" value="TreeGrafter"/>
</dbReference>
<dbReference type="GO" id="GO:0008237">
    <property type="term" value="F:metallopeptidase activity"/>
    <property type="evidence" value="ECO:0007669"/>
    <property type="project" value="UniProtKB-KW"/>
</dbReference>
<dbReference type="GO" id="GO:0045148">
    <property type="term" value="F:tripeptide aminopeptidase activity"/>
    <property type="evidence" value="ECO:0007669"/>
    <property type="project" value="UniProtKB-UniRule"/>
</dbReference>
<dbReference type="GO" id="GO:0008270">
    <property type="term" value="F:zinc ion binding"/>
    <property type="evidence" value="ECO:0007669"/>
    <property type="project" value="UniProtKB-UniRule"/>
</dbReference>
<dbReference type="GO" id="GO:0043171">
    <property type="term" value="P:peptide catabolic process"/>
    <property type="evidence" value="ECO:0007669"/>
    <property type="project" value="UniProtKB-UniRule"/>
</dbReference>
<dbReference type="GO" id="GO:0006508">
    <property type="term" value="P:proteolysis"/>
    <property type="evidence" value="ECO:0007669"/>
    <property type="project" value="UniProtKB-UniRule"/>
</dbReference>
<dbReference type="CDD" id="cd03892">
    <property type="entry name" value="M20_peptT"/>
    <property type="match status" value="1"/>
</dbReference>
<dbReference type="FunFam" id="3.30.70.360:FF:000002">
    <property type="entry name" value="Peptidase T"/>
    <property type="match status" value="1"/>
</dbReference>
<dbReference type="Gene3D" id="3.30.70.360">
    <property type="match status" value="1"/>
</dbReference>
<dbReference type="Gene3D" id="3.40.630.10">
    <property type="entry name" value="Zn peptidases"/>
    <property type="match status" value="1"/>
</dbReference>
<dbReference type="HAMAP" id="MF_00550">
    <property type="entry name" value="Aminopeptidase_M20"/>
    <property type="match status" value="1"/>
</dbReference>
<dbReference type="InterPro" id="IPR001261">
    <property type="entry name" value="ArgE/DapE_CS"/>
</dbReference>
<dbReference type="InterPro" id="IPR036264">
    <property type="entry name" value="Bact_exopeptidase_dim_dom"/>
</dbReference>
<dbReference type="InterPro" id="IPR002933">
    <property type="entry name" value="Peptidase_M20"/>
</dbReference>
<dbReference type="InterPro" id="IPR011650">
    <property type="entry name" value="Peptidase_M20_dimer"/>
</dbReference>
<dbReference type="InterPro" id="IPR010161">
    <property type="entry name" value="Peptidase_M20B"/>
</dbReference>
<dbReference type="NCBIfam" id="TIGR01882">
    <property type="entry name" value="peptidase-T"/>
    <property type="match status" value="1"/>
</dbReference>
<dbReference type="NCBIfam" id="NF003976">
    <property type="entry name" value="PRK05469.1"/>
    <property type="match status" value="1"/>
</dbReference>
<dbReference type="NCBIfam" id="NF009920">
    <property type="entry name" value="PRK13381.1"/>
    <property type="match status" value="1"/>
</dbReference>
<dbReference type="PANTHER" id="PTHR42994">
    <property type="entry name" value="PEPTIDASE T"/>
    <property type="match status" value="1"/>
</dbReference>
<dbReference type="PANTHER" id="PTHR42994:SF1">
    <property type="entry name" value="PEPTIDASE T"/>
    <property type="match status" value="1"/>
</dbReference>
<dbReference type="Pfam" id="PF07687">
    <property type="entry name" value="M20_dimer"/>
    <property type="match status" value="1"/>
</dbReference>
<dbReference type="Pfam" id="PF01546">
    <property type="entry name" value="Peptidase_M20"/>
    <property type="match status" value="1"/>
</dbReference>
<dbReference type="PIRSF" id="PIRSF037215">
    <property type="entry name" value="Peptidase_M20B"/>
    <property type="match status" value="1"/>
</dbReference>
<dbReference type="SUPFAM" id="SSF55031">
    <property type="entry name" value="Bacterial exopeptidase dimerisation domain"/>
    <property type="match status" value="1"/>
</dbReference>
<dbReference type="SUPFAM" id="SSF53187">
    <property type="entry name" value="Zn-dependent exopeptidases"/>
    <property type="match status" value="1"/>
</dbReference>
<dbReference type="PROSITE" id="PS00758">
    <property type="entry name" value="ARGE_DAPE_CPG2_1"/>
    <property type="match status" value="1"/>
</dbReference>
<dbReference type="PROSITE" id="PS00759">
    <property type="entry name" value="ARGE_DAPE_CPG2_2"/>
    <property type="match status" value="1"/>
</dbReference>
<name>PEPT_SALAR</name>
<protein>
    <recommendedName>
        <fullName evidence="1">Peptidase T</fullName>
        <ecNumber evidence="1">3.4.11.4</ecNumber>
    </recommendedName>
    <alternativeName>
        <fullName evidence="1">Aminotripeptidase</fullName>
        <shortName evidence="1">Tripeptidase</shortName>
    </alternativeName>
    <alternativeName>
        <fullName evidence="1">Tripeptide aminopeptidase</fullName>
    </alternativeName>
</protein>
<keyword id="KW-0031">Aminopeptidase</keyword>
<keyword id="KW-0963">Cytoplasm</keyword>
<keyword id="KW-0378">Hydrolase</keyword>
<keyword id="KW-0479">Metal-binding</keyword>
<keyword id="KW-0482">Metalloprotease</keyword>
<keyword id="KW-0645">Protease</keyword>
<keyword id="KW-1185">Reference proteome</keyword>
<keyword id="KW-0862">Zinc</keyword>
<evidence type="ECO:0000255" key="1">
    <source>
        <dbReference type="HAMAP-Rule" id="MF_00550"/>
    </source>
</evidence>
<accession>A9MG86</accession>
<reference key="1">
    <citation type="submission" date="2007-11" db="EMBL/GenBank/DDBJ databases">
        <authorList>
            <consortium name="The Salmonella enterica serovar Arizonae Genome Sequencing Project"/>
            <person name="McClelland M."/>
            <person name="Sanderson E.K."/>
            <person name="Porwollik S."/>
            <person name="Spieth J."/>
            <person name="Clifton W.S."/>
            <person name="Fulton R."/>
            <person name="Chunyan W."/>
            <person name="Wollam A."/>
            <person name="Shah N."/>
            <person name="Pepin K."/>
            <person name="Bhonagiri V."/>
            <person name="Nash W."/>
            <person name="Johnson M."/>
            <person name="Thiruvilangam P."/>
            <person name="Wilson R."/>
        </authorList>
    </citation>
    <scope>NUCLEOTIDE SEQUENCE [LARGE SCALE GENOMIC DNA]</scope>
    <source>
        <strain>ATCC BAA-731 / CDC346-86 / RSK2980</strain>
    </source>
</reference>
<gene>
    <name evidence="1" type="primary">pepT</name>
    <name type="ordered locus">SARI_01762</name>
</gene>
<comment type="function">
    <text evidence="1">Cleaves the N-terminal amino acid of tripeptides.</text>
</comment>
<comment type="catalytic activity">
    <reaction evidence="1">
        <text>Release of the N-terminal residue from a tripeptide.</text>
        <dbReference type="EC" id="3.4.11.4"/>
    </reaction>
</comment>
<comment type="cofactor">
    <cofactor evidence="1">
        <name>Zn(2+)</name>
        <dbReference type="ChEBI" id="CHEBI:29105"/>
    </cofactor>
    <text evidence="1">Binds 2 Zn(2+) ions per subunit.</text>
</comment>
<comment type="subcellular location">
    <subcellularLocation>
        <location evidence="1">Cytoplasm</location>
    </subcellularLocation>
</comment>
<comment type="similarity">
    <text evidence="1">Belongs to the peptidase M20B family.</text>
</comment>